<name>VIME_ONCMY</name>
<comment type="function">
    <text>Vimentins are class-III intermediate filaments found in various non-epithelial cells, especially mesenchymal cells. Vimentin is attached to the nucleus, endoplasmic reticulum, and mitochondria, either laterally or terminally.</text>
</comment>
<comment type="subunit">
    <text evidence="1">Homomer assembled from elementary dimers.</text>
</comment>
<comment type="subcellular location">
    <subcellularLocation>
        <location evidence="2">Cytoplasm</location>
    </subcellularLocation>
    <subcellularLocation>
        <location evidence="2">Cytoplasm</location>
        <location evidence="2">Cytoskeleton</location>
    </subcellularLocation>
    <subcellularLocation>
        <location evidence="3">Nucleus matrix</location>
    </subcellularLocation>
</comment>
<comment type="domain">
    <text evidence="1">The central alpha-helical coiled-coil IF rod domain mediates elementary homodimerization.</text>
</comment>
<comment type="PTM">
    <text evidence="2">One of the most prominent phosphoproteins in various cells of mesenchymal origin. Phosphorylation is enhanced during cell division, at which time vimentin filaments are significantly reorganized.</text>
</comment>
<comment type="similarity">
    <text evidence="4">Belongs to the intermediate filament family.</text>
</comment>
<accession>P48674</accession>
<evidence type="ECO:0000250" key="1"/>
<evidence type="ECO:0000250" key="2">
    <source>
        <dbReference type="UniProtKB" id="P08670"/>
    </source>
</evidence>
<evidence type="ECO:0000250" key="3">
    <source>
        <dbReference type="UniProtKB" id="P31000"/>
    </source>
</evidence>
<evidence type="ECO:0000255" key="4">
    <source>
        <dbReference type="PROSITE-ProRule" id="PRU01188"/>
    </source>
</evidence>
<evidence type="ECO:0000256" key="5">
    <source>
        <dbReference type="SAM" id="MobiDB-lite"/>
    </source>
</evidence>
<keyword id="KW-0175">Coiled coil</keyword>
<keyword id="KW-0963">Cytoplasm</keyword>
<keyword id="KW-0206">Cytoskeleton</keyword>
<keyword id="KW-0403">Intermediate filament</keyword>
<keyword id="KW-0539">Nucleus</keyword>
<protein>
    <recommendedName>
        <fullName>Vimentin</fullName>
    </recommendedName>
</protein>
<dbReference type="EMBL" id="Z50738">
    <property type="protein sequence ID" value="CAA90601.1"/>
    <property type="molecule type" value="mRNA"/>
</dbReference>
<dbReference type="RefSeq" id="NP_001118201.1">
    <property type="nucleotide sequence ID" value="NM_001124729.1"/>
</dbReference>
<dbReference type="SMR" id="P48674"/>
<dbReference type="GeneID" id="100136784"/>
<dbReference type="KEGG" id="omy:100136784"/>
<dbReference type="CTD" id="7431"/>
<dbReference type="OrthoDB" id="2441647at2759"/>
<dbReference type="Proteomes" id="UP000694395">
    <property type="component" value="Unplaced"/>
</dbReference>
<dbReference type="GO" id="GO:0030424">
    <property type="term" value="C:axon"/>
    <property type="evidence" value="ECO:0007669"/>
    <property type="project" value="TreeGrafter"/>
</dbReference>
<dbReference type="GO" id="GO:0005737">
    <property type="term" value="C:cytoplasm"/>
    <property type="evidence" value="ECO:0000314"/>
    <property type="project" value="AgBase"/>
</dbReference>
<dbReference type="GO" id="GO:0005856">
    <property type="term" value="C:cytoskeleton"/>
    <property type="evidence" value="ECO:0000314"/>
    <property type="project" value="AgBase"/>
</dbReference>
<dbReference type="GO" id="GO:0005882">
    <property type="term" value="C:intermediate filament"/>
    <property type="evidence" value="ECO:0000250"/>
    <property type="project" value="UniProtKB"/>
</dbReference>
<dbReference type="GO" id="GO:0016363">
    <property type="term" value="C:nuclear matrix"/>
    <property type="evidence" value="ECO:0007669"/>
    <property type="project" value="UniProtKB-SubCell"/>
</dbReference>
<dbReference type="GO" id="GO:0005886">
    <property type="term" value="C:plasma membrane"/>
    <property type="evidence" value="ECO:0007669"/>
    <property type="project" value="TreeGrafter"/>
</dbReference>
<dbReference type="GO" id="GO:0005200">
    <property type="term" value="F:structural constituent of cytoskeleton"/>
    <property type="evidence" value="ECO:0007669"/>
    <property type="project" value="TreeGrafter"/>
</dbReference>
<dbReference type="GO" id="GO:0045109">
    <property type="term" value="P:intermediate filament organization"/>
    <property type="evidence" value="ECO:0007669"/>
    <property type="project" value="TreeGrafter"/>
</dbReference>
<dbReference type="FunFam" id="1.20.5.1160:FF:000001">
    <property type="entry name" value="Keratin type II"/>
    <property type="match status" value="1"/>
</dbReference>
<dbReference type="FunFam" id="1.20.5.170:FF:000002">
    <property type="entry name" value="Type I keratin KA11"/>
    <property type="match status" value="1"/>
</dbReference>
<dbReference type="FunFam" id="1.20.5.500:FF:000001">
    <property type="entry name" value="Type II keratin 23"/>
    <property type="match status" value="1"/>
</dbReference>
<dbReference type="Gene3D" id="1.20.5.170">
    <property type="match status" value="1"/>
</dbReference>
<dbReference type="Gene3D" id="1.20.5.500">
    <property type="entry name" value="Single helix bin"/>
    <property type="match status" value="1"/>
</dbReference>
<dbReference type="Gene3D" id="1.20.5.1160">
    <property type="entry name" value="Vasodilator-stimulated phosphoprotein"/>
    <property type="match status" value="1"/>
</dbReference>
<dbReference type="InterPro" id="IPR018039">
    <property type="entry name" value="IF_conserved"/>
</dbReference>
<dbReference type="InterPro" id="IPR039008">
    <property type="entry name" value="IF_rod_dom"/>
</dbReference>
<dbReference type="InterPro" id="IPR006821">
    <property type="entry name" value="Intermed_filament_DNA-bd"/>
</dbReference>
<dbReference type="InterPro" id="IPR050405">
    <property type="entry name" value="Intermediate_filament"/>
</dbReference>
<dbReference type="PANTHER" id="PTHR45652">
    <property type="entry name" value="GLIAL FIBRILLARY ACIDIC PROTEIN"/>
    <property type="match status" value="1"/>
</dbReference>
<dbReference type="PANTHER" id="PTHR45652:SF5">
    <property type="entry name" value="VIMENTIN"/>
    <property type="match status" value="1"/>
</dbReference>
<dbReference type="Pfam" id="PF00038">
    <property type="entry name" value="Filament"/>
    <property type="match status" value="1"/>
</dbReference>
<dbReference type="Pfam" id="PF04732">
    <property type="entry name" value="Filament_head"/>
    <property type="match status" value="1"/>
</dbReference>
<dbReference type="SMART" id="SM01391">
    <property type="entry name" value="Filament"/>
    <property type="match status" value="1"/>
</dbReference>
<dbReference type="SUPFAM" id="SSF64593">
    <property type="entry name" value="Intermediate filament protein, coiled coil region"/>
    <property type="match status" value="2"/>
</dbReference>
<dbReference type="PROSITE" id="PS00226">
    <property type="entry name" value="IF_ROD_1"/>
    <property type="match status" value="1"/>
</dbReference>
<dbReference type="PROSITE" id="PS51842">
    <property type="entry name" value="IF_ROD_2"/>
    <property type="match status" value="1"/>
</dbReference>
<sequence>MNRTTSRQTTSSSSYKRMFGGEGRPSVGMARSTLSSRQYSSPVRSSRMSYSVSAPPSIYASKNVRLRSSAPMPRLSSDTVDFALSDAINSEFKANRTNEKAEMQHLNDRFASYIDKVRFLEQQNKILLAELEQLKGKGASRIGDLYEDEMRDLRRQVDQLTNEKAHVEVDRDNMGEDIERLREKLQDEMIQKEEAEHNLQSFRQDVDNASLARLDLERKVESLQEEIIFLRKLHDEEVAELQAQIQDQHVQIDMDVAKPDLTAALRDVRVQYETLASRNLQDSEDWYKSKFADLSEAANRNTDAIRQAKQEANEYRRQVQALTCEVDSLKGTNESMERQMRELEESFGCEANNFQDTISRLEDDIRNMKDEMARHLREYQDLLNVKMALDIEIATYRKLLEGEESRITTPMPNFSSFNLRESMLEARPMIDNLSKKVVIKTIETRDGHVINESTQNHDDLE</sequence>
<gene>
    <name type="primary">vim</name>
</gene>
<reference key="1">
    <citation type="journal article" date="1996" name="J. Cell Sci.">
        <title>Vimentin in a cold-water fish, the rainbow trout: highly conserved primary structure but unique assembly properties.</title>
        <authorList>
            <person name="Herrmann H."/>
            <person name="Muenick M.D."/>
            <person name="Brettel M."/>
            <person name="Fouquet B."/>
            <person name="Markl J."/>
        </authorList>
    </citation>
    <scope>NUCLEOTIDE SEQUENCE [MRNA]</scope>
    <source>
        <tissue>Spleen</tissue>
    </source>
</reference>
<feature type="chain" id="PRO_0000063768" description="Vimentin">
    <location>
        <begin position="1"/>
        <end position="461"/>
    </location>
</feature>
<feature type="domain" description="IF rod" evidence="4">
    <location>
        <begin position="99"/>
        <end position="407"/>
    </location>
</feature>
<feature type="region of interest" description="Head">
    <location>
        <begin position="1"/>
        <end position="91"/>
    </location>
</feature>
<feature type="region of interest" description="Disordered" evidence="5">
    <location>
        <begin position="1"/>
        <end position="52"/>
    </location>
</feature>
<feature type="region of interest" description="Coil 1A">
    <location>
        <begin position="92"/>
        <end position="127"/>
    </location>
</feature>
<feature type="region of interest" description="Linker 1">
    <location>
        <begin position="128"/>
        <end position="149"/>
    </location>
</feature>
<feature type="region of interest" description="Coil 1B">
    <location>
        <begin position="150"/>
        <end position="241"/>
    </location>
</feature>
<feature type="region of interest" description="Linker 12">
    <location>
        <begin position="242"/>
        <end position="264"/>
    </location>
</feature>
<feature type="region of interest" description="Coil 2">
    <location>
        <begin position="265"/>
        <end position="403"/>
    </location>
</feature>
<feature type="region of interest" description="Tail">
    <location>
        <begin position="404"/>
        <end position="461"/>
    </location>
</feature>
<feature type="coiled-coil region">
    <location>
        <begin position="92"/>
        <end position="127"/>
    </location>
</feature>
<feature type="coiled-coil region">
    <location>
        <begin position="150"/>
        <end position="241"/>
    </location>
</feature>
<feature type="coiled-coil region">
    <location>
        <begin position="299"/>
        <end position="403"/>
    </location>
</feature>
<feature type="compositionally biased region" description="Low complexity" evidence="5">
    <location>
        <begin position="1"/>
        <end position="14"/>
    </location>
</feature>
<feature type="compositionally biased region" description="Low complexity" evidence="5">
    <location>
        <begin position="35"/>
        <end position="52"/>
    </location>
</feature>
<feature type="site" description="Stutter" evidence="1">
    <location>
        <position position="347"/>
    </location>
</feature>
<proteinExistence type="evidence at transcript level"/>
<organism>
    <name type="scientific">Oncorhynchus mykiss</name>
    <name type="common">Rainbow trout</name>
    <name type="synonym">Salmo gairdneri</name>
    <dbReference type="NCBI Taxonomy" id="8022"/>
    <lineage>
        <taxon>Eukaryota</taxon>
        <taxon>Metazoa</taxon>
        <taxon>Chordata</taxon>
        <taxon>Craniata</taxon>
        <taxon>Vertebrata</taxon>
        <taxon>Euteleostomi</taxon>
        <taxon>Actinopterygii</taxon>
        <taxon>Neopterygii</taxon>
        <taxon>Teleostei</taxon>
        <taxon>Protacanthopterygii</taxon>
        <taxon>Salmoniformes</taxon>
        <taxon>Salmonidae</taxon>
        <taxon>Salmoninae</taxon>
        <taxon>Oncorhynchus</taxon>
    </lineage>
</organism>